<name>OSTCN_PONPY</name>
<feature type="signal peptide" evidence="8">
    <location>
        <begin position="1"/>
        <end position="23"/>
    </location>
</feature>
<feature type="propeptide" id="PRO_0000285417" evidence="7">
    <location>
        <begin position="24"/>
        <end position="51"/>
    </location>
</feature>
<feature type="chain" id="PRO_0000148904" description="Osteocalcin">
    <location>
        <begin position="52"/>
        <end position="100"/>
    </location>
</feature>
<feature type="domain" description="Gla" evidence="6">
    <location>
        <begin position="52"/>
        <end position="98"/>
    </location>
</feature>
<feature type="binding site" evidence="3">
    <location>
        <position position="68"/>
    </location>
    <ligand>
        <name>Ca(2+)</name>
        <dbReference type="ChEBI" id="CHEBI:29108"/>
        <label>1</label>
    </ligand>
</feature>
<feature type="binding site" evidence="3">
    <location>
        <position position="72"/>
    </location>
    <ligand>
        <name>Ca(2+)</name>
        <dbReference type="ChEBI" id="CHEBI:29108"/>
        <label>2</label>
    </ligand>
</feature>
<feature type="binding site" evidence="3">
    <location>
        <position position="75"/>
    </location>
    <ligand>
        <name>Ca(2+)</name>
        <dbReference type="ChEBI" id="CHEBI:29108"/>
        <label>2</label>
    </ligand>
</feature>
<feature type="binding site" evidence="3">
    <location>
        <position position="75"/>
    </location>
    <ligand>
        <name>Ca(2+)</name>
        <dbReference type="ChEBI" id="CHEBI:29108"/>
        <label>3</label>
    </ligand>
</feature>
<feature type="binding site" evidence="3">
    <location>
        <position position="81"/>
    </location>
    <ligand>
        <name>Ca(2+)</name>
        <dbReference type="ChEBI" id="CHEBI:29108"/>
        <label>3</label>
    </ligand>
</feature>
<feature type="modified residue" description="4-carboxyglutamate" evidence="1 6">
    <location>
        <position position="68"/>
    </location>
</feature>
<feature type="modified residue" description="4-carboxyglutamate" evidence="4 6">
    <location>
        <position position="72"/>
    </location>
</feature>
<feature type="modified residue" description="4-carboxyglutamate" evidence="4 6">
    <location>
        <position position="75"/>
    </location>
</feature>
<feature type="disulfide bond" evidence="6">
    <location>
        <begin position="74"/>
        <end position="80"/>
    </location>
</feature>
<organism>
    <name type="scientific">Pongo pygmaeus</name>
    <name type="common">Bornean orangutan</name>
    <dbReference type="NCBI Taxonomy" id="9600"/>
    <lineage>
        <taxon>Eukaryota</taxon>
        <taxon>Metazoa</taxon>
        <taxon>Chordata</taxon>
        <taxon>Craniata</taxon>
        <taxon>Vertebrata</taxon>
        <taxon>Euteleostomi</taxon>
        <taxon>Mammalia</taxon>
        <taxon>Eutheria</taxon>
        <taxon>Euarchontoglires</taxon>
        <taxon>Primates</taxon>
        <taxon>Haplorrhini</taxon>
        <taxon>Catarrhini</taxon>
        <taxon>Hominidae</taxon>
        <taxon>Pongo</taxon>
    </lineage>
</organism>
<gene>
    <name evidence="2" type="primary">BGLAP</name>
</gene>
<dbReference type="EMBL" id="DQ977503">
    <property type="protein sequence ID" value="ABM89297.1"/>
    <property type="molecule type" value="Genomic_DNA"/>
</dbReference>
<dbReference type="SMR" id="P84350"/>
<dbReference type="GO" id="GO:0005737">
    <property type="term" value="C:cytoplasm"/>
    <property type="evidence" value="ECO:0000250"/>
    <property type="project" value="UniProtKB"/>
</dbReference>
<dbReference type="GO" id="GO:0005576">
    <property type="term" value="C:extracellular region"/>
    <property type="evidence" value="ECO:0007669"/>
    <property type="project" value="UniProtKB-SubCell"/>
</dbReference>
<dbReference type="GO" id="GO:0005509">
    <property type="term" value="F:calcium ion binding"/>
    <property type="evidence" value="ECO:0007669"/>
    <property type="project" value="InterPro"/>
</dbReference>
<dbReference type="GO" id="GO:0005179">
    <property type="term" value="F:hormone activity"/>
    <property type="evidence" value="ECO:0000250"/>
    <property type="project" value="UniProtKB"/>
</dbReference>
<dbReference type="GO" id="GO:0046848">
    <property type="term" value="F:hydroxyapatite binding"/>
    <property type="evidence" value="ECO:0007669"/>
    <property type="project" value="TreeGrafter"/>
</dbReference>
<dbReference type="GO" id="GO:0008147">
    <property type="term" value="F:structural constituent of bone"/>
    <property type="evidence" value="ECO:0000250"/>
    <property type="project" value="UniProtKB"/>
</dbReference>
<dbReference type="GO" id="GO:0031214">
    <property type="term" value="P:biomineral tissue development"/>
    <property type="evidence" value="ECO:0007669"/>
    <property type="project" value="UniProtKB-KW"/>
</dbReference>
<dbReference type="GO" id="GO:0060348">
    <property type="term" value="P:bone development"/>
    <property type="evidence" value="ECO:0007669"/>
    <property type="project" value="InterPro"/>
</dbReference>
<dbReference type="GO" id="GO:0007420">
    <property type="term" value="P:brain development"/>
    <property type="evidence" value="ECO:0000250"/>
    <property type="project" value="UniProtKB"/>
</dbReference>
<dbReference type="GO" id="GO:0032869">
    <property type="term" value="P:cellular response to insulin stimulus"/>
    <property type="evidence" value="ECO:0000250"/>
    <property type="project" value="UniProtKB"/>
</dbReference>
<dbReference type="GO" id="GO:0050890">
    <property type="term" value="P:cognition"/>
    <property type="evidence" value="ECO:0000250"/>
    <property type="project" value="UniProtKB"/>
</dbReference>
<dbReference type="GO" id="GO:0042593">
    <property type="term" value="P:glucose homeostasis"/>
    <property type="evidence" value="ECO:0000250"/>
    <property type="project" value="UniProtKB"/>
</dbReference>
<dbReference type="GO" id="GO:0007611">
    <property type="term" value="P:learning or memory"/>
    <property type="evidence" value="ECO:0000250"/>
    <property type="project" value="UniProtKB"/>
</dbReference>
<dbReference type="GO" id="GO:1903011">
    <property type="term" value="P:negative regulation of bone development"/>
    <property type="evidence" value="ECO:0000250"/>
    <property type="project" value="UniProtKB"/>
</dbReference>
<dbReference type="GO" id="GO:0001649">
    <property type="term" value="P:osteoblast differentiation"/>
    <property type="evidence" value="ECO:0007669"/>
    <property type="project" value="TreeGrafter"/>
</dbReference>
<dbReference type="GO" id="GO:0001956">
    <property type="term" value="P:positive regulation of neurotransmitter secretion"/>
    <property type="evidence" value="ECO:0000250"/>
    <property type="project" value="UniProtKB"/>
</dbReference>
<dbReference type="GO" id="GO:0030500">
    <property type="term" value="P:regulation of bone mineralization"/>
    <property type="evidence" value="ECO:0007669"/>
    <property type="project" value="InterPro"/>
</dbReference>
<dbReference type="GO" id="GO:1900076">
    <property type="term" value="P:regulation of cellular response to insulin stimulus"/>
    <property type="evidence" value="ECO:0007669"/>
    <property type="project" value="InterPro"/>
</dbReference>
<dbReference type="GO" id="GO:2000224">
    <property type="term" value="P:regulation of testosterone biosynthetic process"/>
    <property type="evidence" value="ECO:0000250"/>
    <property type="project" value="UniProtKB"/>
</dbReference>
<dbReference type="GO" id="GO:0032571">
    <property type="term" value="P:response to vitamin K"/>
    <property type="evidence" value="ECO:0007669"/>
    <property type="project" value="InterPro"/>
</dbReference>
<dbReference type="GO" id="GO:0044342">
    <property type="term" value="P:type B pancreatic cell proliferation"/>
    <property type="evidence" value="ECO:0000250"/>
    <property type="project" value="UniProtKB"/>
</dbReference>
<dbReference type="InterPro" id="IPR035972">
    <property type="entry name" value="GLA-like_dom_SF"/>
</dbReference>
<dbReference type="InterPro" id="IPR000294">
    <property type="entry name" value="GLA_domain"/>
</dbReference>
<dbReference type="InterPro" id="IPR039176">
    <property type="entry name" value="Osteocalcin"/>
</dbReference>
<dbReference type="InterPro" id="IPR002384">
    <property type="entry name" value="Osteocalcin/MGP"/>
</dbReference>
<dbReference type="PANTHER" id="PTHR14235">
    <property type="entry name" value="OSTEOCALCIN"/>
    <property type="match status" value="1"/>
</dbReference>
<dbReference type="PANTHER" id="PTHR14235:SF0">
    <property type="entry name" value="OSTEOCALCIN"/>
    <property type="match status" value="1"/>
</dbReference>
<dbReference type="PRINTS" id="PR00002">
    <property type="entry name" value="GLABONE"/>
</dbReference>
<dbReference type="SMART" id="SM00069">
    <property type="entry name" value="GLA"/>
    <property type="match status" value="1"/>
</dbReference>
<dbReference type="SUPFAM" id="SSF57630">
    <property type="entry name" value="GLA-domain"/>
    <property type="match status" value="1"/>
</dbReference>
<dbReference type="PROSITE" id="PS00011">
    <property type="entry name" value="GLA_1"/>
    <property type="match status" value="1"/>
</dbReference>
<dbReference type="PROSITE" id="PS50998">
    <property type="entry name" value="GLA_2"/>
    <property type="match status" value="1"/>
</dbReference>
<protein>
    <recommendedName>
        <fullName>Osteocalcin</fullName>
    </recommendedName>
    <alternativeName>
        <fullName>Bone Gla protein</fullName>
        <shortName>BGP</shortName>
    </alternativeName>
    <alternativeName>
        <fullName>Gamma-carboxyglutamic acid-containing protein</fullName>
    </alternativeName>
</protein>
<accession>P84350</accession>
<accession>A2T7L9</accession>
<evidence type="ECO:0000250" key="1">
    <source>
        <dbReference type="UniProtKB" id="P02818"/>
    </source>
</evidence>
<evidence type="ECO:0000250" key="2">
    <source>
        <dbReference type="UniProtKB" id="P02819"/>
    </source>
</evidence>
<evidence type="ECO:0000250" key="3">
    <source>
        <dbReference type="UniProtKB" id="P02820"/>
    </source>
</evidence>
<evidence type="ECO:0000250" key="4">
    <source>
        <dbReference type="UniProtKB" id="P83489"/>
    </source>
</evidence>
<evidence type="ECO:0000250" key="5">
    <source>
        <dbReference type="UniProtKB" id="P86546"/>
    </source>
</evidence>
<evidence type="ECO:0000255" key="6">
    <source>
        <dbReference type="PROSITE-ProRule" id="PRU00463"/>
    </source>
</evidence>
<evidence type="ECO:0000269" key="7">
    <source>
    </source>
</evidence>
<evidence type="ECO:0000305" key="8"/>
<proteinExistence type="evidence at protein level"/>
<keyword id="KW-0091">Biomineralization</keyword>
<keyword id="KW-0106">Calcium</keyword>
<keyword id="KW-0165">Cleavage on pair of basic residues</keyword>
<keyword id="KW-0903">Direct protein sequencing</keyword>
<keyword id="KW-1015">Disulfide bond</keyword>
<keyword id="KW-0301">Gamma-carboxyglutamic acid</keyword>
<keyword id="KW-0372">Hormone</keyword>
<keyword id="KW-0479">Metal-binding</keyword>
<keyword id="KW-0964">Secreted</keyword>
<keyword id="KW-0732">Signal</keyword>
<comment type="function">
    <text evidence="5">The carboxylated form is one of the main organic components of the bone matrix, which constitutes 1-2% of the total bone protein: it acts as a negative regulator of bone formation and is required to limit bone formation without impairing bone resorption or mineralization. The carboxylated form binds strongly to apatite and calcium.</text>
</comment>
<comment type="function">
    <text evidence="5">The uncarboxylated form acts as a hormone secreted by osteoblasts, which regulates different cellular processes, such as energy metabolism, male fertility and brain development. Regulates of energy metabolism by acting as a hormone favoring pancreatic beta-cell proliferation, insulin secretion and sensitivity and energy expenditure. Uncarboxylated osteocalcin hormone also promotes testosterone production in the testes: acts as a ligand for G protein-coupled receptor GPRC6A at the surface of Leydig cells, initiating a signaling response that promotes the expression of enzymes required for testosterone synthesis in a CREB-dependent manner. Also acts as a regulator of brain development: osteocalcin hormone crosses the blood-brain barrier and acts as a ligand for GPR158 on neurons, initiating a signaling response that prevents neuronal apoptosis in the hippocampus, favors the synthesis of all monoamine neurotransmitters and inhibits that of gamma-aminobutyric acid (GABA). Osteocalcin also crosses the placenta during pregnancy and maternal osteocalcin is required for fetal brain development.</text>
</comment>
<comment type="subcellular location">
    <subcellularLocation>
        <location evidence="5">Secreted</location>
    </subcellularLocation>
</comment>
<comment type="PTM">
    <text evidence="5 6">Gamma-carboxyglutamate residues are formed by vitamin K dependent carboxylation by GGCX. These residues are essential for the binding of calcium (By similarity). Decarboxylation promotes the hormone activity (By similarity).</text>
</comment>
<comment type="similarity">
    <text evidence="8">Belongs to the osteocalcin/matrix Gla protein family.</text>
</comment>
<reference key="1">
    <citation type="submission" date="2006-08" db="EMBL/GenBank/DDBJ databases">
        <title>Positive selection in transcription factor genes on the human lineage.</title>
        <authorList>
            <person name="Nickel G.C."/>
            <person name="Tefft D.L."/>
            <person name="Trevarthen K."/>
            <person name="Funt J."/>
            <person name="Adams M.D."/>
        </authorList>
    </citation>
    <scope>NUCLEOTIDE SEQUENCE [GENOMIC DNA]</scope>
</reference>
<reference evidence="8" key="2">
    <citation type="journal article" date="2005" name="Proc. Natl. Acad. Sci. U.S.A.">
        <title>Osteocalcin protein sequences of Neanderthals and modern primates.</title>
        <authorList>
            <person name="Nielsen-Marsh C.M."/>
            <person name="Richards M.P."/>
            <person name="Hauschka P.V."/>
            <person name="Thomas-Oates J.E."/>
            <person name="Trinkaus E."/>
            <person name="Pettit P.B."/>
            <person name="Karavanic I."/>
            <person name="Poinar H."/>
            <person name="Collins M.J."/>
        </authorList>
    </citation>
    <scope>PROTEIN SEQUENCE OF 52-84</scope>
    <source>
        <tissue evidence="7">Bone</tissue>
    </source>
</reference>
<sequence length="100" mass="10951">MRALTLLALLALAALCITGQAGAKPSGADSSKGAAFVSKQEGSEVVKRPRRYLYQWLGAPVPYPDPLEPKREVCELNPDCDELADHIGFQEAYRRFYGPV</sequence>